<name>RK23_CYACA</name>
<keyword id="KW-0150">Chloroplast</keyword>
<keyword id="KW-0934">Plastid</keyword>
<keyword id="KW-0687">Ribonucleoprotein</keyword>
<keyword id="KW-0689">Ribosomal protein</keyword>
<keyword id="KW-0694">RNA-binding</keyword>
<keyword id="KW-0699">rRNA-binding</keyword>
<feature type="chain" id="PRO_0000129448" description="Large ribosomal subunit protein uL23c">
    <location>
        <begin position="1"/>
        <end position="101"/>
    </location>
</feature>
<gene>
    <name type="primary">rpl23</name>
</gene>
<geneLocation type="chloroplast"/>
<organism>
    <name type="scientific">Cyanidium caldarium</name>
    <name type="common">Red alga</name>
    <dbReference type="NCBI Taxonomy" id="2771"/>
    <lineage>
        <taxon>Eukaryota</taxon>
        <taxon>Rhodophyta</taxon>
        <taxon>Bangiophyceae</taxon>
        <taxon>Cyanidiales</taxon>
        <taxon>Cyanidiaceae</taxon>
        <taxon>Cyanidium</taxon>
    </lineage>
</organism>
<sequence>MAKIISSELPDLILSSVITDKTIKLLETKNYTFLAPKEVSKIAFKRAIEDMFKVKVNSINSLNLPNKKKRVGRYKTGSLPLYKKMIVKLDSKDTIDLFLDR</sequence>
<proteinExistence type="inferred from homology"/>
<accession>Q9TLT4</accession>
<comment type="function">
    <text evidence="1">Binds to 23S rRNA.</text>
</comment>
<comment type="subunit">
    <text evidence="1">Part of the 50S ribosomal subunit.</text>
</comment>
<comment type="subcellular location">
    <subcellularLocation>
        <location>Plastid</location>
        <location>Chloroplast</location>
    </subcellularLocation>
</comment>
<comment type="similarity">
    <text evidence="2">Belongs to the universal ribosomal protein uL23 family.</text>
</comment>
<evidence type="ECO:0000250" key="1"/>
<evidence type="ECO:0000305" key="2"/>
<dbReference type="EMBL" id="AF022186">
    <property type="protein sequence ID" value="AAF12909.1"/>
    <property type="molecule type" value="Genomic_DNA"/>
</dbReference>
<dbReference type="RefSeq" id="NP_045185.1">
    <property type="nucleotide sequence ID" value="NC_001840.1"/>
</dbReference>
<dbReference type="SMR" id="Q9TLT4"/>
<dbReference type="GeneID" id="800153"/>
<dbReference type="GO" id="GO:0009507">
    <property type="term" value="C:chloroplast"/>
    <property type="evidence" value="ECO:0007669"/>
    <property type="project" value="UniProtKB-SubCell"/>
</dbReference>
<dbReference type="GO" id="GO:1990904">
    <property type="term" value="C:ribonucleoprotein complex"/>
    <property type="evidence" value="ECO:0007669"/>
    <property type="project" value="UniProtKB-KW"/>
</dbReference>
<dbReference type="GO" id="GO:0005840">
    <property type="term" value="C:ribosome"/>
    <property type="evidence" value="ECO:0007669"/>
    <property type="project" value="UniProtKB-KW"/>
</dbReference>
<dbReference type="GO" id="GO:0019843">
    <property type="term" value="F:rRNA binding"/>
    <property type="evidence" value="ECO:0007669"/>
    <property type="project" value="UniProtKB-UniRule"/>
</dbReference>
<dbReference type="GO" id="GO:0003735">
    <property type="term" value="F:structural constituent of ribosome"/>
    <property type="evidence" value="ECO:0007669"/>
    <property type="project" value="InterPro"/>
</dbReference>
<dbReference type="GO" id="GO:0006412">
    <property type="term" value="P:translation"/>
    <property type="evidence" value="ECO:0007669"/>
    <property type="project" value="UniProtKB-UniRule"/>
</dbReference>
<dbReference type="Gene3D" id="3.30.70.330">
    <property type="match status" value="1"/>
</dbReference>
<dbReference type="HAMAP" id="MF_01369_B">
    <property type="entry name" value="Ribosomal_uL23_B"/>
    <property type="match status" value="1"/>
</dbReference>
<dbReference type="InterPro" id="IPR012677">
    <property type="entry name" value="Nucleotide-bd_a/b_plait_sf"/>
</dbReference>
<dbReference type="InterPro" id="IPR013025">
    <property type="entry name" value="Ribosomal_uL23-like"/>
</dbReference>
<dbReference type="InterPro" id="IPR012678">
    <property type="entry name" value="Ribosomal_uL23/eL15/eS24_sf"/>
</dbReference>
<dbReference type="Pfam" id="PF00276">
    <property type="entry name" value="Ribosomal_L23"/>
    <property type="match status" value="1"/>
</dbReference>
<dbReference type="SUPFAM" id="SSF54189">
    <property type="entry name" value="Ribosomal proteins S24e, L23 and L15e"/>
    <property type="match status" value="1"/>
</dbReference>
<reference key="1">
    <citation type="journal article" date="2000" name="J. Mol. Evol.">
        <title>The structure and gene repertoire of an ancient red algal plastid genome.</title>
        <authorList>
            <person name="Gloeckner G."/>
            <person name="Rosenthal A."/>
            <person name="Valentin K.-U."/>
        </authorList>
    </citation>
    <scope>NUCLEOTIDE SEQUENCE [LARGE SCALE GENOMIC DNA]</scope>
    <source>
        <strain>RK-1</strain>
    </source>
</reference>
<protein>
    <recommendedName>
        <fullName evidence="2">Large ribosomal subunit protein uL23c</fullName>
    </recommendedName>
    <alternativeName>
        <fullName>50S ribosomal protein L23, chloroplastic</fullName>
    </alternativeName>
</protein>